<reference key="1">
    <citation type="submission" date="2006-06" db="EMBL/GenBank/DDBJ databases">
        <title>Complete sequence of Pseudoalteromonas atlantica T6c.</title>
        <authorList>
            <consortium name="US DOE Joint Genome Institute"/>
            <person name="Copeland A."/>
            <person name="Lucas S."/>
            <person name="Lapidus A."/>
            <person name="Barry K."/>
            <person name="Detter J.C."/>
            <person name="Glavina del Rio T."/>
            <person name="Hammon N."/>
            <person name="Israni S."/>
            <person name="Dalin E."/>
            <person name="Tice H."/>
            <person name="Pitluck S."/>
            <person name="Saunders E."/>
            <person name="Brettin T."/>
            <person name="Bruce D."/>
            <person name="Han C."/>
            <person name="Tapia R."/>
            <person name="Gilna P."/>
            <person name="Schmutz J."/>
            <person name="Larimer F."/>
            <person name="Land M."/>
            <person name="Hauser L."/>
            <person name="Kyrpides N."/>
            <person name="Kim E."/>
            <person name="Karls A.C."/>
            <person name="Bartlett D."/>
            <person name="Higgins B.P."/>
            <person name="Richardson P."/>
        </authorList>
    </citation>
    <scope>NUCLEOTIDE SEQUENCE [LARGE SCALE GENOMIC DNA]</scope>
    <source>
        <strain>T6c / ATCC BAA-1087</strain>
    </source>
</reference>
<gene>
    <name evidence="1" type="primary">cmoA</name>
    <name type="ordered locus">Patl_4027</name>
</gene>
<sequence>MQSSKDAIYSQPQQVSDFRFDDTVAEVFPDMIQRSVPGYNTIVDAIGQLAGRYATNNSNIYDLGCSLGAVSLAAAKYVVADNCSIIAVDNSEAMAQRCARHVKAYKANTPIEVICDDLQNIHIENASSVVMNFTLQFIDPTQRDQIIQSIYDGLAPGGIFILSEKLRHASEQGNELLIDLHHEFKRRNGYSELEISQKRESIENILRAETFEAHQTRLQNAGFDDVVLWFQCFNFASIVAIKS</sequence>
<comment type="function">
    <text evidence="1">Catalyzes the conversion of S-adenosyl-L-methionine (SAM) to carboxy-S-adenosyl-L-methionine (Cx-SAM).</text>
</comment>
<comment type="catalytic activity">
    <reaction evidence="1">
        <text>prephenate + S-adenosyl-L-methionine = carboxy-S-adenosyl-L-methionine + 3-phenylpyruvate + H2O</text>
        <dbReference type="Rhea" id="RHEA:51692"/>
        <dbReference type="ChEBI" id="CHEBI:15377"/>
        <dbReference type="ChEBI" id="CHEBI:18005"/>
        <dbReference type="ChEBI" id="CHEBI:29934"/>
        <dbReference type="ChEBI" id="CHEBI:59789"/>
        <dbReference type="ChEBI" id="CHEBI:134278"/>
    </reaction>
</comment>
<comment type="subunit">
    <text evidence="1">Homodimer.</text>
</comment>
<comment type="similarity">
    <text evidence="1">Belongs to the class I-like SAM-binding methyltransferase superfamily. Cx-SAM synthase family.</text>
</comment>
<keyword id="KW-0949">S-adenosyl-L-methionine</keyword>
<keyword id="KW-0808">Transferase</keyword>
<proteinExistence type="inferred from homology"/>
<evidence type="ECO:0000255" key="1">
    <source>
        <dbReference type="HAMAP-Rule" id="MF_01589"/>
    </source>
</evidence>
<accession>Q15NL2</accession>
<feature type="chain" id="PRO_0000314354" description="Carboxy-S-adenosyl-L-methionine synthase">
    <location>
        <begin position="1"/>
        <end position="243"/>
    </location>
</feature>
<feature type="binding site" evidence="1">
    <location>
        <position position="39"/>
    </location>
    <ligand>
        <name>S-adenosyl-L-methionine</name>
        <dbReference type="ChEBI" id="CHEBI:59789"/>
    </ligand>
</feature>
<feature type="binding site" evidence="1">
    <location>
        <begin position="64"/>
        <end position="66"/>
    </location>
    <ligand>
        <name>S-adenosyl-L-methionine</name>
        <dbReference type="ChEBI" id="CHEBI:59789"/>
    </ligand>
</feature>
<feature type="binding site" evidence="1">
    <location>
        <begin position="89"/>
        <end position="90"/>
    </location>
    <ligand>
        <name>S-adenosyl-L-methionine</name>
        <dbReference type="ChEBI" id="CHEBI:59789"/>
    </ligand>
</feature>
<feature type="binding site" evidence="1">
    <location>
        <begin position="117"/>
        <end position="118"/>
    </location>
    <ligand>
        <name>S-adenosyl-L-methionine</name>
        <dbReference type="ChEBI" id="CHEBI:59789"/>
    </ligand>
</feature>
<feature type="binding site" evidence="1">
    <location>
        <position position="132"/>
    </location>
    <ligand>
        <name>S-adenosyl-L-methionine</name>
        <dbReference type="ChEBI" id="CHEBI:59789"/>
    </ligand>
</feature>
<feature type="binding site" evidence="1">
    <location>
        <position position="199"/>
    </location>
    <ligand>
        <name>S-adenosyl-L-methionine</name>
        <dbReference type="ChEBI" id="CHEBI:59789"/>
    </ligand>
</feature>
<protein>
    <recommendedName>
        <fullName evidence="1">Carboxy-S-adenosyl-L-methionine synthase</fullName>
        <shortName evidence="1">Cx-SAM synthase</shortName>
        <ecNumber evidence="1">2.1.3.-</ecNumber>
    </recommendedName>
</protein>
<organism>
    <name type="scientific">Pseudoalteromonas atlantica (strain T6c / ATCC BAA-1087)</name>
    <dbReference type="NCBI Taxonomy" id="3042615"/>
    <lineage>
        <taxon>Bacteria</taxon>
        <taxon>Pseudomonadati</taxon>
        <taxon>Pseudomonadota</taxon>
        <taxon>Gammaproteobacteria</taxon>
        <taxon>Alteromonadales</taxon>
        <taxon>Alteromonadaceae</taxon>
        <taxon>Paraglaciecola</taxon>
    </lineage>
</organism>
<dbReference type="EC" id="2.1.3.-" evidence="1"/>
<dbReference type="EMBL" id="CP000388">
    <property type="protein sequence ID" value="ABG42526.1"/>
    <property type="molecule type" value="Genomic_DNA"/>
</dbReference>
<dbReference type="RefSeq" id="WP_011576725.1">
    <property type="nucleotide sequence ID" value="NC_008228.1"/>
</dbReference>
<dbReference type="SMR" id="Q15NL2"/>
<dbReference type="STRING" id="342610.Patl_4027"/>
<dbReference type="KEGG" id="pat:Patl_4027"/>
<dbReference type="eggNOG" id="COG4123">
    <property type="taxonomic scope" value="Bacteria"/>
</dbReference>
<dbReference type="HOGENOM" id="CLU_078475_0_0_6"/>
<dbReference type="OrthoDB" id="9779941at2"/>
<dbReference type="Proteomes" id="UP000001981">
    <property type="component" value="Chromosome"/>
</dbReference>
<dbReference type="GO" id="GO:0016743">
    <property type="term" value="F:carboxyl- or carbamoyltransferase activity"/>
    <property type="evidence" value="ECO:0007669"/>
    <property type="project" value="UniProtKB-UniRule"/>
</dbReference>
<dbReference type="GO" id="GO:1904047">
    <property type="term" value="F:S-adenosyl-L-methionine binding"/>
    <property type="evidence" value="ECO:0007669"/>
    <property type="project" value="UniProtKB-UniRule"/>
</dbReference>
<dbReference type="GO" id="GO:0002098">
    <property type="term" value="P:tRNA wobble uridine modification"/>
    <property type="evidence" value="ECO:0007669"/>
    <property type="project" value="InterPro"/>
</dbReference>
<dbReference type="CDD" id="cd02440">
    <property type="entry name" value="AdoMet_MTases"/>
    <property type="match status" value="1"/>
</dbReference>
<dbReference type="Gene3D" id="3.40.50.150">
    <property type="entry name" value="Vaccinia Virus protein VP39"/>
    <property type="match status" value="1"/>
</dbReference>
<dbReference type="HAMAP" id="MF_01589">
    <property type="entry name" value="Cx_SAM_synthase"/>
    <property type="match status" value="1"/>
</dbReference>
<dbReference type="InterPro" id="IPR005271">
    <property type="entry name" value="CmoA"/>
</dbReference>
<dbReference type="InterPro" id="IPR041698">
    <property type="entry name" value="Methyltransf_25"/>
</dbReference>
<dbReference type="InterPro" id="IPR029063">
    <property type="entry name" value="SAM-dependent_MTases_sf"/>
</dbReference>
<dbReference type="NCBIfam" id="TIGR00740">
    <property type="entry name" value="carboxy-S-adenosyl-L-methionine synthase CmoA"/>
    <property type="match status" value="1"/>
</dbReference>
<dbReference type="NCBIfam" id="NF011995">
    <property type="entry name" value="PRK15451.1"/>
    <property type="match status" value="1"/>
</dbReference>
<dbReference type="PANTHER" id="PTHR43861:SF2">
    <property type="entry name" value="CARBOXY-S-ADENOSYL-L-METHIONINE SYNTHASE"/>
    <property type="match status" value="1"/>
</dbReference>
<dbReference type="PANTHER" id="PTHR43861">
    <property type="entry name" value="TRANS-ACONITATE 2-METHYLTRANSFERASE-RELATED"/>
    <property type="match status" value="1"/>
</dbReference>
<dbReference type="Pfam" id="PF13649">
    <property type="entry name" value="Methyltransf_25"/>
    <property type="match status" value="1"/>
</dbReference>
<dbReference type="PIRSF" id="PIRSF006325">
    <property type="entry name" value="MeTrfase_bac"/>
    <property type="match status" value="1"/>
</dbReference>
<dbReference type="SUPFAM" id="SSF53335">
    <property type="entry name" value="S-adenosyl-L-methionine-dependent methyltransferases"/>
    <property type="match status" value="1"/>
</dbReference>
<name>CMOA_PSEA6</name>